<sequence>MTVDLDQYAKPGKDYYLALGLEGSANKLGVGVIKHNLGQLSLDNRAEILSNVRDTYVTPPGEGFLPRDTARHHRNWAVRIIKKALIEAKVKGSDLDCICFTQGPGMGAPLQSVVIAARTLSQLWDLPLVGVNHCVGHIEMGREITGADNPVVLYVSGGNTQVIAYSRQRYRIFGETLDIAIGNCLDRFARTLRIPNEPAPGYNIEQMAKKGKHLVPLPYTVKGMDLSMSGILAHVDSLAKDLFAENKNKKLIDDETGEQITSEDLCFSLQETLFSMLVEITERAMAHVQSNQVLIVGGVGSNERLQQMMELMVNDRKNGSIFATDERFCIDNGIMIAHAGLLGYRMGQTNELWNTVCTQRFRTDEVFVKWRDD</sequence>
<accession>Q6BNC5</accession>
<evidence type="ECO:0000255" key="1">
    <source>
        <dbReference type="HAMAP-Rule" id="MF_03180"/>
    </source>
</evidence>
<feature type="chain" id="PRO_0000278934" description="tRNA N6-adenosine threonylcarbamoyltransferase">
    <location>
        <begin position="1"/>
        <end position="373"/>
    </location>
</feature>
<feature type="binding site" evidence="1">
    <location>
        <position position="133"/>
    </location>
    <ligand>
        <name>a divalent metal cation</name>
        <dbReference type="ChEBI" id="CHEBI:60240"/>
    </ligand>
</feature>
<feature type="binding site" evidence="1">
    <location>
        <position position="137"/>
    </location>
    <ligand>
        <name>a divalent metal cation</name>
        <dbReference type="ChEBI" id="CHEBI:60240"/>
    </ligand>
</feature>
<feature type="binding site" evidence="1">
    <location>
        <begin position="154"/>
        <end position="158"/>
    </location>
    <ligand>
        <name>substrate</name>
    </ligand>
</feature>
<feature type="binding site" evidence="1">
    <location>
        <position position="154"/>
    </location>
    <ligand>
        <name>a divalent metal cation</name>
        <dbReference type="ChEBI" id="CHEBI:60240"/>
    </ligand>
</feature>
<feature type="binding site" evidence="1">
    <location>
        <position position="186"/>
    </location>
    <ligand>
        <name>substrate</name>
    </ligand>
</feature>
<feature type="binding site" evidence="1">
    <location>
        <position position="201"/>
    </location>
    <ligand>
        <name>substrate</name>
    </ligand>
</feature>
<feature type="binding site" evidence="1">
    <location>
        <position position="205"/>
    </location>
    <ligand>
        <name>substrate</name>
    </ligand>
</feature>
<feature type="binding site" evidence="1">
    <location>
        <position position="302"/>
    </location>
    <ligand>
        <name>substrate</name>
    </ligand>
</feature>
<feature type="binding site" evidence="1">
    <location>
        <position position="331"/>
    </location>
    <ligand>
        <name>a divalent metal cation</name>
        <dbReference type="ChEBI" id="CHEBI:60240"/>
    </ligand>
</feature>
<name>KAE1_DEBHA</name>
<dbReference type="EC" id="2.3.1.234" evidence="1"/>
<dbReference type="EMBL" id="CR382137">
    <property type="protein sequence ID" value="CAG88579.1"/>
    <property type="molecule type" value="Genomic_DNA"/>
</dbReference>
<dbReference type="RefSeq" id="XP_460295.1">
    <property type="nucleotide sequence ID" value="XM_460295.1"/>
</dbReference>
<dbReference type="SMR" id="Q6BNC5"/>
<dbReference type="FunCoup" id="Q6BNC5">
    <property type="interactions" value="614"/>
</dbReference>
<dbReference type="STRING" id="284592.Q6BNC5"/>
<dbReference type="GeneID" id="2902535"/>
<dbReference type="KEGG" id="dha:DEHA2E22902g"/>
<dbReference type="VEuPathDB" id="FungiDB:DEHA2E22902g"/>
<dbReference type="eggNOG" id="KOG2708">
    <property type="taxonomic scope" value="Eukaryota"/>
</dbReference>
<dbReference type="HOGENOM" id="CLU_023208_2_2_1"/>
<dbReference type="InParanoid" id="Q6BNC5"/>
<dbReference type="OMA" id="HHRSWVV"/>
<dbReference type="OrthoDB" id="10254073at2759"/>
<dbReference type="Proteomes" id="UP000000599">
    <property type="component" value="Chromosome E"/>
</dbReference>
<dbReference type="GO" id="GO:0000785">
    <property type="term" value="C:chromatin"/>
    <property type="evidence" value="ECO:0007669"/>
    <property type="project" value="EnsemblFungi"/>
</dbReference>
<dbReference type="GO" id="GO:0005737">
    <property type="term" value="C:cytoplasm"/>
    <property type="evidence" value="ECO:0007669"/>
    <property type="project" value="UniProtKB-SubCell"/>
</dbReference>
<dbReference type="GO" id="GO:0000408">
    <property type="term" value="C:EKC/KEOPS complex"/>
    <property type="evidence" value="ECO:0007669"/>
    <property type="project" value="EnsemblFungi"/>
</dbReference>
<dbReference type="GO" id="GO:0005634">
    <property type="term" value="C:nucleus"/>
    <property type="evidence" value="ECO:0007669"/>
    <property type="project" value="UniProtKB-SubCell"/>
</dbReference>
<dbReference type="GO" id="GO:0031490">
    <property type="term" value="F:chromatin DNA binding"/>
    <property type="evidence" value="ECO:0007669"/>
    <property type="project" value="EnsemblFungi"/>
</dbReference>
<dbReference type="GO" id="GO:0046872">
    <property type="term" value="F:metal ion binding"/>
    <property type="evidence" value="ECO:0007669"/>
    <property type="project" value="UniProtKB-KW"/>
</dbReference>
<dbReference type="GO" id="GO:0061711">
    <property type="term" value="F:N(6)-L-threonylcarbamoyladenine synthase activity"/>
    <property type="evidence" value="ECO:0007669"/>
    <property type="project" value="UniProtKB-EC"/>
</dbReference>
<dbReference type="GO" id="GO:0008252">
    <property type="term" value="F:nucleotidase activity"/>
    <property type="evidence" value="ECO:0007669"/>
    <property type="project" value="EnsemblFungi"/>
</dbReference>
<dbReference type="GO" id="GO:0045944">
    <property type="term" value="P:positive regulation of transcription by RNA polymerase II"/>
    <property type="evidence" value="ECO:0007669"/>
    <property type="project" value="EnsemblFungi"/>
</dbReference>
<dbReference type="GO" id="GO:0000722">
    <property type="term" value="P:telomere maintenance via recombination"/>
    <property type="evidence" value="ECO:0007669"/>
    <property type="project" value="EnsemblFungi"/>
</dbReference>
<dbReference type="GO" id="GO:0002949">
    <property type="term" value="P:tRNA threonylcarbamoyladenosine modification"/>
    <property type="evidence" value="ECO:0007669"/>
    <property type="project" value="UniProtKB-UniRule"/>
</dbReference>
<dbReference type="CDD" id="cd24132">
    <property type="entry name" value="ASKHA_NBD_OSGEP_like_euk"/>
    <property type="match status" value="1"/>
</dbReference>
<dbReference type="FunFam" id="3.30.420.40:FF:000038">
    <property type="entry name" value="Probable tRNA N6-adenosine threonylcarbamoyltransferase"/>
    <property type="match status" value="1"/>
</dbReference>
<dbReference type="FunFam" id="3.30.420.40:FF:000295">
    <property type="entry name" value="Probable tRNA N6-adenosine threonylcarbamoyltransferase"/>
    <property type="match status" value="1"/>
</dbReference>
<dbReference type="Gene3D" id="3.30.420.40">
    <property type="match status" value="2"/>
</dbReference>
<dbReference type="HAMAP" id="MF_01446">
    <property type="entry name" value="Kae1"/>
    <property type="match status" value="1"/>
</dbReference>
<dbReference type="InterPro" id="IPR043129">
    <property type="entry name" value="ATPase_NBD"/>
</dbReference>
<dbReference type="InterPro" id="IPR000905">
    <property type="entry name" value="Gcp-like_dom"/>
</dbReference>
<dbReference type="InterPro" id="IPR017861">
    <property type="entry name" value="KAE1/TsaD"/>
</dbReference>
<dbReference type="InterPro" id="IPR034680">
    <property type="entry name" value="Kae1_archaea_euk"/>
</dbReference>
<dbReference type="InterPro" id="IPR017860">
    <property type="entry name" value="Peptidase_M22_CS"/>
</dbReference>
<dbReference type="NCBIfam" id="TIGR03722">
    <property type="entry name" value="arch_KAE1"/>
    <property type="match status" value="1"/>
</dbReference>
<dbReference type="NCBIfam" id="TIGR00329">
    <property type="entry name" value="gcp_kae1"/>
    <property type="match status" value="1"/>
</dbReference>
<dbReference type="PANTHER" id="PTHR11735">
    <property type="entry name" value="TRNA N6-ADENOSINE THREONYLCARBAMOYLTRANSFERASE"/>
    <property type="match status" value="1"/>
</dbReference>
<dbReference type="PANTHER" id="PTHR11735:SF14">
    <property type="entry name" value="TRNA N6-ADENOSINE THREONYLCARBAMOYLTRANSFERASE"/>
    <property type="match status" value="1"/>
</dbReference>
<dbReference type="Pfam" id="PF00814">
    <property type="entry name" value="TsaD"/>
    <property type="match status" value="1"/>
</dbReference>
<dbReference type="PRINTS" id="PR00789">
    <property type="entry name" value="OSIALOPTASE"/>
</dbReference>
<dbReference type="SUPFAM" id="SSF53067">
    <property type="entry name" value="Actin-like ATPase domain"/>
    <property type="match status" value="1"/>
</dbReference>
<dbReference type="PROSITE" id="PS01016">
    <property type="entry name" value="GLYCOPROTEASE"/>
    <property type="match status" value="1"/>
</dbReference>
<proteinExistence type="inferred from homology"/>
<keyword id="KW-0010">Activator</keyword>
<keyword id="KW-0012">Acyltransferase</keyword>
<keyword id="KW-0963">Cytoplasm</keyword>
<keyword id="KW-0479">Metal-binding</keyword>
<keyword id="KW-0539">Nucleus</keyword>
<keyword id="KW-1185">Reference proteome</keyword>
<keyword id="KW-0804">Transcription</keyword>
<keyword id="KW-0805">Transcription regulation</keyword>
<keyword id="KW-0808">Transferase</keyword>
<keyword id="KW-0819">tRNA processing</keyword>
<gene>
    <name evidence="1" type="primary">KAE1</name>
    <name type="ordered locus">DEHA2E22902g</name>
</gene>
<reference key="1">
    <citation type="journal article" date="2004" name="Nature">
        <title>Genome evolution in yeasts.</title>
        <authorList>
            <person name="Dujon B."/>
            <person name="Sherman D."/>
            <person name="Fischer G."/>
            <person name="Durrens P."/>
            <person name="Casaregola S."/>
            <person name="Lafontaine I."/>
            <person name="de Montigny J."/>
            <person name="Marck C."/>
            <person name="Neuveglise C."/>
            <person name="Talla E."/>
            <person name="Goffard N."/>
            <person name="Frangeul L."/>
            <person name="Aigle M."/>
            <person name="Anthouard V."/>
            <person name="Babour A."/>
            <person name="Barbe V."/>
            <person name="Barnay S."/>
            <person name="Blanchin S."/>
            <person name="Beckerich J.-M."/>
            <person name="Beyne E."/>
            <person name="Bleykasten C."/>
            <person name="Boisrame A."/>
            <person name="Boyer J."/>
            <person name="Cattolico L."/>
            <person name="Confanioleri F."/>
            <person name="de Daruvar A."/>
            <person name="Despons L."/>
            <person name="Fabre E."/>
            <person name="Fairhead C."/>
            <person name="Ferry-Dumazet H."/>
            <person name="Groppi A."/>
            <person name="Hantraye F."/>
            <person name="Hennequin C."/>
            <person name="Jauniaux N."/>
            <person name="Joyet P."/>
            <person name="Kachouri R."/>
            <person name="Kerrest A."/>
            <person name="Koszul R."/>
            <person name="Lemaire M."/>
            <person name="Lesur I."/>
            <person name="Ma L."/>
            <person name="Muller H."/>
            <person name="Nicaud J.-M."/>
            <person name="Nikolski M."/>
            <person name="Oztas S."/>
            <person name="Ozier-Kalogeropoulos O."/>
            <person name="Pellenz S."/>
            <person name="Potier S."/>
            <person name="Richard G.-F."/>
            <person name="Straub M.-L."/>
            <person name="Suleau A."/>
            <person name="Swennen D."/>
            <person name="Tekaia F."/>
            <person name="Wesolowski-Louvel M."/>
            <person name="Westhof E."/>
            <person name="Wirth B."/>
            <person name="Zeniou-Meyer M."/>
            <person name="Zivanovic Y."/>
            <person name="Bolotin-Fukuhara M."/>
            <person name="Thierry A."/>
            <person name="Bouchier C."/>
            <person name="Caudron B."/>
            <person name="Scarpelli C."/>
            <person name="Gaillardin C."/>
            <person name="Weissenbach J."/>
            <person name="Wincker P."/>
            <person name="Souciet J.-L."/>
        </authorList>
    </citation>
    <scope>NUCLEOTIDE SEQUENCE [LARGE SCALE GENOMIC DNA]</scope>
    <source>
        <strain>ATCC 36239 / CBS 767 / BCRC 21394 / JCM 1990 / NBRC 0083 / IGC 2968</strain>
    </source>
</reference>
<comment type="function">
    <text evidence="1">Component of the EKC/KEOPS complex that is required for the formation of a threonylcarbamoyl group on adenosine at position 37 (t(6)A37) in tRNAs that read codons beginning with adenine. The complex is probably involved in the transfer of the threonylcarbamoyl moiety of threonylcarbamoyl-AMP (TC-AMP) to the N6 group of A37. KAE1 likely plays a direct catalytic role in this reaction, but requires other protein(s) of the complex to fulfill this activity. The EKC/KEOPS complex also promotes both telomere uncapping and telomere elongation. The complex is required for efficient recruitment of transcriptional coactivators.</text>
</comment>
<comment type="catalytic activity">
    <reaction evidence="1">
        <text>L-threonylcarbamoyladenylate + adenosine(37) in tRNA = N(6)-L-threonylcarbamoyladenosine(37) in tRNA + AMP + H(+)</text>
        <dbReference type="Rhea" id="RHEA:37059"/>
        <dbReference type="Rhea" id="RHEA-COMP:10162"/>
        <dbReference type="Rhea" id="RHEA-COMP:10163"/>
        <dbReference type="ChEBI" id="CHEBI:15378"/>
        <dbReference type="ChEBI" id="CHEBI:73682"/>
        <dbReference type="ChEBI" id="CHEBI:74411"/>
        <dbReference type="ChEBI" id="CHEBI:74418"/>
        <dbReference type="ChEBI" id="CHEBI:456215"/>
        <dbReference type="EC" id="2.3.1.234"/>
    </reaction>
</comment>
<comment type="cofactor">
    <cofactor evidence="1">
        <name>a divalent metal cation</name>
        <dbReference type="ChEBI" id="CHEBI:60240"/>
    </cofactor>
    <text evidence="1">Binds 1 divalent metal cation per subunit.</text>
</comment>
<comment type="subunit">
    <text evidence="1">Component of the EKC/KEOPS complex composed of at least BUD32, CGI121, GON7, KAE1 and PCC1; the whole complex dimerizes.</text>
</comment>
<comment type="subcellular location">
    <subcellularLocation>
        <location evidence="1">Cytoplasm</location>
    </subcellularLocation>
    <subcellularLocation>
        <location evidence="1">Nucleus</location>
    </subcellularLocation>
</comment>
<comment type="similarity">
    <text evidence="1">Belongs to the KAE1 / TsaD family.</text>
</comment>
<organism>
    <name type="scientific">Debaryomyces hansenii (strain ATCC 36239 / CBS 767 / BCRC 21394 / JCM 1990 / NBRC 0083 / IGC 2968)</name>
    <name type="common">Yeast</name>
    <name type="synonym">Torulaspora hansenii</name>
    <dbReference type="NCBI Taxonomy" id="284592"/>
    <lineage>
        <taxon>Eukaryota</taxon>
        <taxon>Fungi</taxon>
        <taxon>Dikarya</taxon>
        <taxon>Ascomycota</taxon>
        <taxon>Saccharomycotina</taxon>
        <taxon>Pichiomycetes</taxon>
        <taxon>Debaryomycetaceae</taxon>
        <taxon>Debaryomyces</taxon>
    </lineage>
</organism>
<protein>
    <recommendedName>
        <fullName evidence="1">tRNA N6-adenosine threonylcarbamoyltransferase</fullName>
        <ecNumber evidence="1">2.3.1.234</ecNumber>
    </recommendedName>
    <alternativeName>
        <fullName>N6-L-threonylcarbamoyladenine synthase</fullName>
        <shortName>t(6)A synthase</shortName>
    </alternativeName>
    <alternativeName>
        <fullName evidence="1">t(6)A37 threonylcarbamoyladenosine biosynthesis protein KAE1</fullName>
    </alternativeName>
    <alternativeName>
        <fullName evidence="1">tRNA threonylcarbamoyladenosine biosynthesis protein KAE1</fullName>
    </alternativeName>
</protein>